<accession>Q1H4N7</accession>
<evidence type="ECO:0000255" key="1">
    <source>
        <dbReference type="HAMAP-Rule" id="MF_01325"/>
    </source>
</evidence>
<evidence type="ECO:0000305" key="2"/>
<sequence>MSLGLIGRKVGMTRIFTDEGESVPVTVLEVVPNRVTQIKTAASDGYTSLQVAYGERRASRIGKALAGHYAKAGVSAGAGIKEFPVSDDVLANYSVGGQITVELFQPGQLVDVTGTSLGKGFSGAIKRHNFSSNRASHGNSRSHNVPGSIGMAQDPGRVFPGKRMPGHLGAVKTTVQNLEIVRVDAERNLLLIKGAVPGSKGGDVVVRPSVKVKA</sequence>
<gene>
    <name evidence="1" type="primary">rplC</name>
    <name type="ordered locus">Mfla_0279</name>
</gene>
<protein>
    <recommendedName>
        <fullName evidence="1">Large ribosomal subunit protein uL3</fullName>
    </recommendedName>
    <alternativeName>
        <fullName evidence="2">50S ribosomal protein L3</fullName>
    </alternativeName>
</protein>
<comment type="function">
    <text evidence="1">One of the primary rRNA binding proteins, it binds directly near the 3'-end of the 23S rRNA, where it nucleates assembly of the 50S subunit.</text>
</comment>
<comment type="subunit">
    <text evidence="1">Part of the 50S ribosomal subunit. Forms a cluster with proteins L14 and L19.</text>
</comment>
<comment type="PTM">
    <text evidence="1">Methylated by PrmB.</text>
</comment>
<comment type="similarity">
    <text evidence="1">Belongs to the universal ribosomal protein uL3 family.</text>
</comment>
<reference key="1">
    <citation type="submission" date="2006-03" db="EMBL/GenBank/DDBJ databases">
        <title>Complete sequence of Methylobacillus flagellatus KT.</title>
        <authorList>
            <consortium name="US DOE Joint Genome Institute"/>
            <person name="Copeland A."/>
            <person name="Lucas S."/>
            <person name="Lapidus A."/>
            <person name="Barry K."/>
            <person name="Detter J.C."/>
            <person name="Glavina del Rio T."/>
            <person name="Hammon N."/>
            <person name="Israni S."/>
            <person name="Dalin E."/>
            <person name="Tice H."/>
            <person name="Pitluck S."/>
            <person name="Brettin T."/>
            <person name="Bruce D."/>
            <person name="Han C."/>
            <person name="Tapia R."/>
            <person name="Saunders E."/>
            <person name="Gilna P."/>
            <person name="Schmutz J."/>
            <person name="Larimer F."/>
            <person name="Land M."/>
            <person name="Kyrpides N."/>
            <person name="Anderson I."/>
            <person name="Richardson P."/>
        </authorList>
    </citation>
    <scope>NUCLEOTIDE SEQUENCE [LARGE SCALE GENOMIC DNA]</scope>
    <source>
        <strain>ATCC 51484 / DSM 6875 / VKM B-1610 / KT</strain>
    </source>
</reference>
<dbReference type="EMBL" id="CP000284">
    <property type="protein sequence ID" value="ABE48550.1"/>
    <property type="molecule type" value="Genomic_DNA"/>
</dbReference>
<dbReference type="RefSeq" id="WP_011478647.1">
    <property type="nucleotide sequence ID" value="NC_007947.1"/>
</dbReference>
<dbReference type="SMR" id="Q1H4N7"/>
<dbReference type="STRING" id="265072.Mfla_0279"/>
<dbReference type="KEGG" id="mfa:Mfla_0279"/>
<dbReference type="eggNOG" id="COG0087">
    <property type="taxonomic scope" value="Bacteria"/>
</dbReference>
<dbReference type="HOGENOM" id="CLU_044142_4_1_4"/>
<dbReference type="OrthoDB" id="9806135at2"/>
<dbReference type="Proteomes" id="UP000002440">
    <property type="component" value="Chromosome"/>
</dbReference>
<dbReference type="GO" id="GO:0022625">
    <property type="term" value="C:cytosolic large ribosomal subunit"/>
    <property type="evidence" value="ECO:0007669"/>
    <property type="project" value="TreeGrafter"/>
</dbReference>
<dbReference type="GO" id="GO:0019843">
    <property type="term" value="F:rRNA binding"/>
    <property type="evidence" value="ECO:0007669"/>
    <property type="project" value="UniProtKB-UniRule"/>
</dbReference>
<dbReference type="GO" id="GO:0003735">
    <property type="term" value="F:structural constituent of ribosome"/>
    <property type="evidence" value="ECO:0007669"/>
    <property type="project" value="InterPro"/>
</dbReference>
<dbReference type="GO" id="GO:0006412">
    <property type="term" value="P:translation"/>
    <property type="evidence" value="ECO:0007669"/>
    <property type="project" value="UniProtKB-UniRule"/>
</dbReference>
<dbReference type="FunFam" id="2.40.30.10:FF:000004">
    <property type="entry name" value="50S ribosomal protein L3"/>
    <property type="match status" value="1"/>
</dbReference>
<dbReference type="FunFam" id="3.30.160.810:FF:000001">
    <property type="entry name" value="50S ribosomal protein L3"/>
    <property type="match status" value="1"/>
</dbReference>
<dbReference type="Gene3D" id="3.30.160.810">
    <property type="match status" value="1"/>
</dbReference>
<dbReference type="Gene3D" id="2.40.30.10">
    <property type="entry name" value="Translation factors"/>
    <property type="match status" value="1"/>
</dbReference>
<dbReference type="HAMAP" id="MF_01325_B">
    <property type="entry name" value="Ribosomal_uL3_B"/>
    <property type="match status" value="1"/>
</dbReference>
<dbReference type="InterPro" id="IPR000597">
    <property type="entry name" value="Ribosomal_uL3"/>
</dbReference>
<dbReference type="InterPro" id="IPR019927">
    <property type="entry name" value="Ribosomal_uL3_bac/org-type"/>
</dbReference>
<dbReference type="InterPro" id="IPR019926">
    <property type="entry name" value="Ribosomal_uL3_CS"/>
</dbReference>
<dbReference type="InterPro" id="IPR009000">
    <property type="entry name" value="Transl_B-barrel_sf"/>
</dbReference>
<dbReference type="NCBIfam" id="TIGR03625">
    <property type="entry name" value="L3_bact"/>
    <property type="match status" value="1"/>
</dbReference>
<dbReference type="PANTHER" id="PTHR11229">
    <property type="entry name" value="50S RIBOSOMAL PROTEIN L3"/>
    <property type="match status" value="1"/>
</dbReference>
<dbReference type="PANTHER" id="PTHR11229:SF16">
    <property type="entry name" value="LARGE RIBOSOMAL SUBUNIT PROTEIN UL3C"/>
    <property type="match status" value="1"/>
</dbReference>
<dbReference type="Pfam" id="PF00297">
    <property type="entry name" value="Ribosomal_L3"/>
    <property type="match status" value="1"/>
</dbReference>
<dbReference type="SUPFAM" id="SSF50447">
    <property type="entry name" value="Translation proteins"/>
    <property type="match status" value="1"/>
</dbReference>
<dbReference type="PROSITE" id="PS00474">
    <property type="entry name" value="RIBOSOMAL_L3"/>
    <property type="match status" value="1"/>
</dbReference>
<organism>
    <name type="scientific">Methylobacillus flagellatus (strain ATCC 51484 / DSM 6875 / VKM B-1610 / KT)</name>
    <dbReference type="NCBI Taxonomy" id="265072"/>
    <lineage>
        <taxon>Bacteria</taxon>
        <taxon>Pseudomonadati</taxon>
        <taxon>Pseudomonadota</taxon>
        <taxon>Betaproteobacteria</taxon>
        <taxon>Nitrosomonadales</taxon>
        <taxon>Methylophilaceae</taxon>
        <taxon>Methylobacillus</taxon>
    </lineage>
</organism>
<proteinExistence type="inferred from homology"/>
<feature type="chain" id="PRO_1000052079" description="Large ribosomal subunit protein uL3">
    <location>
        <begin position="1"/>
        <end position="214"/>
    </location>
</feature>
<feature type="modified residue" description="N5-methylglutamine" evidence="1">
    <location>
        <position position="153"/>
    </location>
</feature>
<name>RL3_METFK</name>
<keyword id="KW-0488">Methylation</keyword>
<keyword id="KW-1185">Reference proteome</keyword>
<keyword id="KW-0687">Ribonucleoprotein</keyword>
<keyword id="KW-0689">Ribosomal protein</keyword>
<keyword id="KW-0694">RNA-binding</keyword>
<keyword id="KW-0699">rRNA-binding</keyword>